<comment type="function">
    <text evidence="1 2">Serine/threonine-protein kinase that acts as a molecular sensor for DNA damage. Involved in DNA nonhomologous end joining (NHEJ) required for double-strand break (DSB) repair and V(D)J recombination. Must be bound to DNA to express its catalytic properties. Promotes processing of hairpin DNA structures in V(D)J recombination by activation of the hairpin endonuclease artemis (DCLRE1C). Recruited by XRCC5 and XRCC6 to DNA ends and is required to (1) protect and align broken ends of DNA, thereby preventing their degradation, (2) and sequester the DSB for repair by NHEJ. Acts as a scaffold protein to aid the localization of DNA repair proteins to the site of damage. The assembly of the DNA-PK complex at DNA ends is also required for the NHEJ ligation step. Found at the ends of chromosomes, suggesting a further role in the maintenance of telomeric stability and the prevention of chromosomal end fusion. As part of the DNA-PK complex, involved in the early steps of ribosome assembly by promoting the processing of precursor rRNA into mature 18S rRNA in the small-subunit processome (By similarity). Recognizes the substrate consensus sequence [ST]-Q. Phosphorylates 'Ser-139' of histone variant H2AX, thereby regulating DNA damage response mechanism (By similarity).</text>
</comment>
<comment type="catalytic activity">
    <reaction evidence="1">
        <text>L-seryl-[protein] + ATP = O-phospho-L-seryl-[protein] + ADP + H(+)</text>
        <dbReference type="Rhea" id="RHEA:17989"/>
        <dbReference type="Rhea" id="RHEA-COMP:9863"/>
        <dbReference type="Rhea" id="RHEA-COMP:11604"/>
        <dbReference type="ChEBI" id="CHEBI:15378"/>
        <dbReference type="ChEBI" id="CHEBI:29999"/>
        <dbReference type="ChEBI" id="CHEBI:30616"/>
        <dbReference type="ChEBI" id="CHEBI:83421"/>
        <dbReference type="ChEBI" id="CHEBI:456216"/>
        <dbReference type="EC" id="2.7.11.1"/>
    </reaction>
</comment>
<comment type="catalytic activity">
    <reaction evidence="1">
        <text>L-threonyl-[protein] + ATP = O-phospho-L-threonyl-[protein] + ADP + H(+)</text>
        <dbReference type="Rhea" id="RHEA:46608"/>
        <dbReference type="Rhea" id="RHEA-COMP:11060"/>
        <dbReference type="Rhea" id="RHEA-COMP:11605"/>
        <dbReference type="ChEBI" id="CHEBI:15378"/>
        <dbReference type="ChEBI" id="CHEBI:30013"/>
        <dbReference type="ChEBI" id="CHEBI:30616"/>
        <dbReference type="ChEBI" id="CHEBI:61977"/>
        <dbReference type="ChEBI" id="CHEBI:456216"/>
        <dbReference type="EC" id="2.7.11.1"/>
    </reaction>
</comment>
<comment type="subunit">
    <text evidence="1">DNA-PK is a heterotrimer of PRKDC and the Ku dimer (composed of XRCC6/Ku70 and XRCC5/Ku86). Component of the core long-range non-homologous end joining (NHEJ) complex (also named DNA-PK complex) composed of PRKDC, LIG4, XRCC4, XRCC6/Ku70, XRCC5/Ku86 and NHEJ1/XLF. Additional component of the NHEJ complex includes PAXX. Following autophosphorylation, PRKDC dissociates from DNA.</text>
</comment>
<comment type="subcellular location">
    <subcellularLocation>
        <location evidence="1">Nucleus</location>
    </subcellularLocation>
    <subcellularLocation>
        <location evidence="1">Nucleus</location>
        <location evidence="1">Nucleolus</location>
    </subcellularLocation>
</comment>
<comment type="PTM">
    <text evidence="1 2">Autophosphorylated at two clusters, the T2609 cluster and the S2056 cluster. Autophosphorylated on Ser-2055, Thr-2609, Thr-2638 and Thr-2647. Ser-2055 and Thr-2609 are DNA damage-inducible phosphorylation sites (inducible with ionizing radiation, IR) dephosphorylated by PPP5C (By similarity). Autophosphorylation induces a conformational change that leads to remodeling of the DNA-PK complex, requisite for efficient end processing and DNA repair (By similarity). Autophosphorylation in trans within DNA-PK complexes loaded on DNA ends leads to the dissociation of PRKDC from DNA and the transition into the short-range NHEJ complex (By similarity). Autophosphorylation of the T2609 cluster is required for hematopoietic development and protein synthesis in erythrocytes precursors (By similarity).</text>
</comment>
<comment type="similarity">
    <text evidence="7">Belongs to the PI3/PI4-kinase family.</text>
</comment>
<evidence type="ECO:0000250" key="1">
    <source>
        <dbReference type="UniProtKB" id="P78527"/>
    </source>
</evidence>
<evidence type="ECO:0000250" key="2">
    <source>
        <dbReference type="UniProtKB" id="P97313"/>
    </source>
</evidence>
<evidence type="ECO:0000255" key="3">
    <source>
        <dbReference type="PROSITE-ProRule" id="PRU00269"/>
    </source>
</evidence>
<evidence type="ECO:0000255" key="4">
    <source>
        <dbReference type="PROSITE-ProRule" id="PRU00534"/>
    </source>
</evidence>
<evidence type="ECO:0000255" key="5">
    <source>
        <dbReference type="PROSITE-ProRule" id="PRU00535"/>
    </source>
</evidence>
<evidence type="ECO:0000256" key="6">
    <source>
        <dbReference type="SAM" id="MobiDB-lite"/>
    </source>
</evidence>
<evidence type="ECO:0000305" key="7"/>
<sequence>MAGGVQECLQELHGCLQPGDAMRGYGLLRGLGEACLTCLAGGALALHVSLVFAPERGLLAFVCRSLGVEEFRECREEALKFLCVFLERIGERAHPYACSLKQTCISVYTKERAAKCKIPALELLIKLLQSLRRSCLMEEMKVGEIFNKFYGELAVRSKISDTVLEKIYELLGVLGEVHPADMINNSEKLFRAYLGELKTQMTSATRVPKLPIVAGCLRGLTALMYNFTKSVDEDAQTSKEIFDFAVKAIRPQVDQKRYAVHLAGLQLFSWHAAQFGTLLLDSYVMLFETMCRWCGHTNQELKKAGHNALDSFLKQMSLMVAKDAELHKSKLKFFMEQFYGIIRRMDSSNKELSIAIRGYGLFAAPCKAMHPADVDAMYIELLQRCKQMYLTEAETIDDHLYQLPSFLQSIASVIFHLDTIPEVYTPVLEHLVVLQINSFPRYSEKMQLVCCRSIIKVFLALSIKGPVLWNFISTVVHQGLIRVFSKPMKFSKDVFGKETSGSEEFPESGEVDTARWKVPTYKDYLYLFRSLLSCDTMKESIFEEENFLTGNSPLQSLNRLLYDELIKSILKIIEKLDLTVQKLNVHEQDENETDSAFIGPTSDPASNLQPKKPTDFIAFINLVEFCRDILPDKHVEYFQPWVYSFGYELIIHSTRLPLISGFYKLLSVTMKIAKKIKYFEGVGPKSLRKATEDPEKSSCFALFAKFGKEVTAKMKQYKDELLASCLNFLLSLPHDIVMLDIKAYIPALQNAFKLGLSCTPMADLGLDALEDWSAHIPRHIMQPYYKDVLPLLDGYLKNSATTVEPQNNWEVRKLSRAAQKGFNKIVIQRLRKAKTSSLDDNPSLEAVRTRVARLLGSLGGQINHNLITATSAEEMMKKCVSWDTKNHLSFAVPFADMKPVIYLDVFLPRVTDLALSASDRQTKIAACELLHSIVAYMLGKASQMPERQQGPPPMHQLYKRIFPVLLRLACDVDQVTRQLYEPLVMQLIHWFTNNKKFESQDTVTFLEAILSGIVDPVDSTLRDFCGQCVREFLKWSIKQTTPKQQEKSPANTKSLFKRLYSLALHPSAFKRLGAALAFNSIYREFREENSLVEQFVFEALVVFLESLALTHTDEKSLGTTQQCCDAINHLKRIIKHKAPALNKEGKRRVPRGFPATKSVCLQDVVMWLLVQCGRPQTECRHKAMELFYEFVPLLPGNNSPSSWLADVLKKRDVSFLINKFEGGGSDAKSPSGILSQPTLRDMQEPFSLLTVMRWMDMFLAALDCYNTFFELRMIKPHEILGVNERSSFLEAVDFFLETIALHDIHAAEQCFDCRSRGNIFSPQEREVYNYSKCTIIVRIMEFVTMILEICQQDFWKLLEKELLNANFIELLVMTVCDPSHIGFNTADVQVMKNLPDISVRLLKALMKSPYKEYLQLCLKKRITPQSFEDLCSVDLFNSDARFDQVRFSAVLSACKQLQKSGLLHSVLHSQDERPHPSIGSKLLSVVYKSIAPGSERSSLPAVDISSKRLADRLLQLAFAIDDQCEELVSLLLNTVVLSVPLSKASERNFVDFSHGQYFYSLFSDTINQQLLKNLDVIVIHLMESSVSNPQMVGSILNGMLDQSFRERTIRKQQGVKLVTAVLRNWKRLDSWWAKDSSPESKMAVLTLLAKVLQIDSSVSFNTSHEAFTAVFDTYTSLLTDQNLGLNLKGHAVIILPFFTNLSGEKLHDLKNALDQLVAFNFPMSSDEFPKGTLKHNNYVDCTKKFLDALELSQSPMLLQLMTEVLCRDHRHSMEDLFQASFKRISRRSSTDKQVVLLDTVHKMFQNEDLLSNIVRQAFVDRSLLTLMSHCSLDALREFFCKIIVQAMDTLNSRFTKSNECVFDTQITKKMGYYKMLEVMYIRLSKDDVHSKDSKINQAYRGSVSVEGNELTKALIKLCYDAFTENMAGENQLLEKRRQYHCAAYNCAIAVISCVFTESKFYQGFLFTEKSEKNLLIFENLIDLKRQYVFPVEIEVPLERKKRYIAIRKEAREAWNDGQDEPKYLASASYMMDSSLSEEMSQFDFSTGVQGFSYSSQDVTASSAHFRRKETSEYMVLNDEMELEMDELNQHECMAPLTTLIKHMQRNQITPKVEEGVIPVDLPLWMKFLHSKLGNPSVPLNIRLFIAKLIVNTEDVFRPYAKQWLGPMLQLVVSGDNGGEGIHYMVVEIAVTVLSWTSVTTPKGNIKDEILANRLLEFLMKNAFHQKRAVFRHNLEIIKTVIECWKNCLSIPYSLIFEKFSSGDPDTKDNSVGIQLLGIVLANNLPPFDLKCEIDRVRYFQALVSNMGLLRYKEVYAAAAEVLGLALQYIAERQNILEDPVYDCVIKQLKRHQNTQQDKFIICLNKVVKNFPPLADRFMNAVFFLIPKLHGVMKNYCLEVIMCRAEEIPDLYLQLKSKDFIQIMKHRDDERQRVCLDIIYKMLSTLKPPELKELLPGVTGFISHPSVICRQRMYDILMWIYDNYSDPESQADGDSQEVLSLAKEILLQGLIDENAELQLIVRNFWSDETRLPANILDRMLMLLNSLYSAKIETQYLSLITNFLLEMTSKSPDYSRKIFEHPLSECKFHDFVIDSSWRYRSTMLTPMFVETQASQSTNRNSSQERSLSISGSVGGRVRATQRQYEFTPTQNVSGRSSFNWLTGNSIDTLAEYTVPSSSESLSSSMLLVNKRSEKFKQAAFKPVGPDFGKKRLSLPGDKVDSKTKGIDERAEILRLRRRFLKDQEKVSLIYARKGVAEQKREKEMKSELKMKFDGQVTLYRSYRVGDLPDIQIEHCSLIAPLQGLAQKDPTFAKQLFSSLFGGIFCEVKKSKIPSEKKAIIQKLLKDFNHFLSTSVSYFPPFIACIQEISYKHRELLELDSANVSTSCLASLQQPVGILLLEHALMALSPAEEPPSKRMRGRTELPPDVVKWLELAKLYRSLGDYDVLRGIFSGKIGTKDITQQALLAEARSDYAEAAKCYDEALSKEDWEDGEPTEAEKDFWELASLECYDHLTEWKSLEYCATVNIDSGKPPDLNKTWSDPFYQETYLPYIIRSKLKLLLNGENDQTLLTFIDEAMKTEQKKALIEMHYSQELSLLYILQDDFDRAKYYIGNGIQIFMQSYSSIDTLLYQSRMSKLQSVQALTEIQDFINFMTKTSNIASQAKSLKRLLRTWTSRYPDAKMDPMNIWDDIITNRCFFLDKLQEKFLCDKANDSMEVDEESSVGDQMEVDQQDEDIHSMIRSCKFNMKLKMIESARKQNSFSIAKKLLKGLRREAKTREDWLVRWNYAYCRFVHSCSQSQSCPERVLSVLKTISLLEDTKSDYLNKNIMAFRNQNLLLGTTYHIMANALSQDPKCCEQIEEEKTGKILELSGESSESPEKILAGLNKRAFQCFSSAARKSEEEVQSLSMEHVDVKGVIDAYMTLVGFCDQHLRKEEEGSLEINAADLQLFPAIVVEKMIKALKLNSREARLRFPRLLQIIERYPAETLGLVTRELPSVPCWQFIGWISQMMALLDKDEAVAVQHTVEEIVDTYPQAIIYPFTISSESYCFKDTAAGCRNKEFVASIKNKLDRGGVVQDFIHALEQLSNPVMLFKDWVADVRNELVKTQRNKIILKEMYEGMYKNLGDVKAPGLGWLRKRFVQAFGKDFDSHFGKGGSKLLDMKISDFNEITTALLTKMNKTHKEPGNLKECSPWMSEFRAEFLRNELEVPGQYDGKGKPLPEYHVKISGFDERIMVLESLRKPKRITIRGSDEQEHPFLVKGGEDLRQDQRIEQLFDVMNIVLSRDAACSQRNMQLKTYQVIPMTTRLGLIKWLENTCTLKEFLRNSMTEEEDANYNSLKGPRAAYSDWLSKMGGKAQGLSRYNAMYKNASRTETVIAFKSRESSVPEDLLRRAFVKMSTSPEAFLALRSHFVSSHALMCVSHWILGIGDRHLSNFMINKETGGMVGIDFGHAFGSATQFLPVPELMPFRLTRQFVNLMMPVKEWGLIYSVMVHALRAYRADPDLLISTMDVFVKEPSLDWKNFEQRQLKKGGTWIKEINTAEVNWYPLQKVSYVKRKLTGANPARITCDELRLGYEKLPFYNDFAAVARGSADHNIRAKEPEDRLSEETQVRCLIDQATDPNLLGRVWEGWEPWM</sequence>
<protein>
    <recommendedName>
        <fullName>DNA-dependent protein kinase catalytic subunit</fullName>
        <shortName>DNA-PK catalytic subunit</shortName>
        <shortName>DNA-PKcs</shortName>
        <ecNumber evidence="1">2.7.11.1</ecNumber>
    </recommendedName>
</protein>
<keyword id="KW-0067">ATP-binding</keyword>
<keyword id="KW-0227">DNA damage</keyword>
<keyword id="KW-0234">DNA repair</keyword>
<keyword id="KW-0418">Kinase</keyword>
<keyword id="KW-0547">Nucleotide-binding</keyword>
<keyword id="KW-0539">Nucleus</keyword>
<keyword id="KW-0597">Phosphoprotein</keyword>
<keyword id="KW-1185">Reference proteome</keyword>
<keyword id="KW-0677">Repeat</keyword>
<keyword id="KW-0690">Ribosome biogenesis</keyword>
<keyword id="KW-0723">Serine/threonine-protein kinase</keyword>
<keyword id="KW-0802">TPR repeat</keyword>
<keyword id="KW-0808">Transferase</keyword>
<reference key="1">
    <citation type="journal article" date="2000" name="Immunogenetics">
        <title>Identification of four highly conserved regions in DNA-PKcs.</title>
        <authorList>
            <person name="Fujimori A."/>
            <person name="Araki R."/>
            <person name="Fukumura R."/>
            <person name="Ohhata T."/>
            <person name="Takahashi H."/>
            <person name="Kawahara A."/>
            <person name="Tatsumi K."/>
            <person name="Abe M."/>
        </authorList>
    </citation>
    <scope>NUCLEOTIDE SEQUENCE [MRNA]</scope>
    <source>
        <tissue>Lymphocyte</tissue>
    </source>
</reference>
<reference key="2">
    <citation type="journal article" date="2002" name="Radiat. Res.">
        <title>Sequence analysis of 193.4 and 83.9 kbp of mouse and chicken genomic DNAs containing the entire Prkdc (DNA-PKcs) gene.</title>
        <authorList>
            <person name="Fujimori A."/>
            <person name="Hashimoto H."/>
            <person name="Araki R."/>
            <person name="Saito T."/>
            <person name="Sato S."/>
            <person name="Kasama Y."/>
            <person name="Tsutsumi Y."/>
            <person name="Mori M."/>
            <person name="Fukumura R."/>
            <person name="Ohhata T."/>
            <person name="Tatsumi K."/>
            <person name="Abe M."/>
        </authorList>
    </citation>
    <scope>NUCLEOTIDE SEQUENCE [GENOMIC DNA]</scope>
</reference>
<reference key="3">
    <citation type="submission" date="1996-12" db="EMBL/GenBank/DDBJ databases">
        <title>Nucleotide sequence of a putative member of the chicken phosphatidylinositol 3-kinase family.</title>
        <authorList>
            <person name="Wang H."/>
            <person name="Meury L."/>
            <person name="Morais R."/>
        </authorList>
    </citation>
    <scope>NUCLEOTIDE SEQUENCE [MRNA] OF 3796-3968</scope>
    <source>
        <strain>White leghorn</strain>
    </source>
</reference>
<feature type="chain" id="PRO_0000225633" description="DNA-dependent protein kinase catalytic subunit">
    <location>
        <begin position="1"/>
        <end position="4134"/>
    </location>
</feature>
<feature type="repeat" description="HEAT 1">
    <location>
        <begin position="900"/>
        <end position="937"/>
    </location>
</feature>
<feature type="repeat" description="HEAT 2">
    <location>
        <begin position="1000"/>
        <end position="1036"/>
    </location>
</feature>
<feature type="repeat" description="HEAT 3">
    <location>
        <begin position="1050"/>
        <end position="1085"/>
    </location>
</feature>
<feature type="repeat" description="TPR 1">
    <location>
        <begin position="1265"/>
        <end position="1305"/>
    </location>
</feature>
<feature type="repeat" description="TPR 2">
    <location>
        <begin position="1722"/>
        <end position="1755"/>
    </location>
</feature>
<feature type="repeat" description="TPR 3">
    <location>
        <begin position="2207"/>
        <end position="2240"/>
    </location>
</feature>
<feature type="domain" description="FAT" evidence="4">
    <location>
        <begin position="2880"/>
        <end position="3545"/>
    </location>
</feature>
<feature type="domain" description="PI3K/PI4K catalytic" evidence="3">
    <location>
        <begin position="3728"/>
        <end position="4059"/>
    </location>
</feature>
<feature type="domain" description="FATC" evidence="4 5">
    <location>
        <begin position="4102"/>
        <end position="4134"/>
    </location>
</feature>
<feature type="region of interest" description="Disordered" evidence="6">
    <location>
        <begin position="2611"/>
        <end position="2631"/>
    </location>
</feature>
<feature type="region of interest" description="G-loop" evidence="3">
    <location>
        <begin position="3734"/>
        <end position="3740"/>
    </location>
</feature>
<feature type="region of interest" description="Catalytic loop" evidence="3">
    <location>
        <begin position="3925"/>
        <end position="3933"/>
    </location>
</feature>
<feature type="region of interest" description="Activation loop" evidence="3">
    <location>
        <begin position="3945"/>
        <end position="3970"/>
    </location>
</feature>
<feature type="compositionally biased region" description="Polar residues" evidence="6">
    <location>
        <begin position="2611"/>
        <end position="2629"/>
    </location>
</feature>
<feature type="modified residue" description="Phosphoserine; by autocatalysis" evidence="1">
    <location>
        <position position="2055"/>
    </location>
</feature>
<feature type="modified residue" description="Phosphothreonine; by autocatalysis" evidence="1">
    <location>
        <position position="2609"/>
    </location>
</feature>
<feature type="modified residue" description="Phosphoserine; by autocatalysis" evidence="1">
    <location>
        <position position="2612"/>
    </location>
</feature>
<feature type="modified residue" description="Phosphothreonine; by autocatalysis" evidence="1">
    <location>
        <position position="2638"/>
    </location>
</feature>
<feature type="modified residue" description="Phosphothreonine; by autocatalysis" evidence="1">
    <location>
        <position position="2647"/>
    </location>
</feature>
<feature type="sequence conflict" description="In Ref. 3; AAB41106." evidence="7" ref="3">
    <original>TYQVIPMTT</original>
    <variation>VHISEYFCS</variation>
    <location>
        <begin position="3796"/>
        <end position="3804"/>
    </location>
</feature>
<feature type="sequence conflict" description="In Ref. 3; AAB41106." evidence="7" ref="3">
    <original>MPFR</original>
    <variation>DALP</variation>
    <location>
        <begin position="3965"/>
        <end position="3968"/>
    </location>
</feature>
<proteinExistence type="evidence at transcript level"/>
<name>PRKDC_CHICK</name>
<gene>
    <name type="primary">PRKDC</name>
    <name type="synonym">XRCC7</name>
</gene>
<organism>
    <name type="scientific">Gallus gallus</name>
    <name type="common">Chicken</name>
    <dbReference type="NCBI Taxonomy" id="9031"/>
    <lineage>
        <taxon>Eukaryota</taxon>
        <taxon>Metazoa</taxon>
        <taxon>Chordata</taxon>
        <taxon>Craniata</taxon>
        <taxon>Vertebrata</taxon>
        <taxon>Euteleostomi</taxon>
        <taxon>Archelosauria</taxon>
        <taxon>Archosauria</taxon>
        <taxon>Dinosauria</taxon>
        <taxon>Saurischia</taxon>
        <taxon>Theropoda</taxon>
        <taxon>Coelurosauria</taxon>
        <taxon>Aves</taxon>
        <taxon>Neognathae</taxon>
        <taxon>Galloanserae</taxon>
        <taxon>Galliformes</taxon>
        <taxon>Phasianidae</taxon>
        <taxon>Phasianinae</taxon>
        <taxon>Gallus</taxon>
    </lineage>
</organism>
<accession>Q8QGX4</accession>
<accession>P79791</accession>
<accession>Q9DEI2</accession>
<dbReference type="EC" id="2.7.11.1" evidence="1"/>
<dbReference type="EMBL" id="AB016240">
    <property type="protein sequence ID" value="BAA36956.1"/>
    <property type="molecule type" value="mRNA"/>
</dbReference>
<dbReference type="EMBL" id="AB028136">
    <property type="protein sequence ID" value="BAB91148.1"/>
    <property type="molecule type" value="Genomic_DNA"/>
</dbReference>
<dbReference type="EMBL" id="U83109">
    <property type="protein sequence ID" value="AAB41106.1"/>
    <property type="molecule type" value="mRNA"/>
</dbReference>
<dbReference type="RefSeq" id="NP_989989.2">
    <property type="nucleotide sequence ID" value="NM_204658.2"/>
</dbReference>
<dbReference type="SMR" id="Q8QGX4"/>
<dbReference type="FunCoup" id="Q8QGX4">
    <property type="interactions" value="2021"/>
</dbReference>
<dbReference type="STRING" id="9031.ENSGALP00000059070"/>
<dbReference type="GlyGen" id="Q8QGX4">
    <property type="glycosylation" value="1 site"/>
</dbReference>
<dbReference type="PaxDb" id="9031-ENSGALP00000021030"/>
<dbReference type="GeneID" id="395376"/>
<dbReference type="KEGG" id="gga:395376"/>
<dbReference type="CTD" id="5591"/>
<dbReference type="VEuPathDB" id="HostDB:geneid_395376"/>
<dbReference type="eggNOG" id="KOG0891">
    <property type="taxonomic scope" value="Eukaryota"/>
</dbReference>
<dbReference type="InParanoid" id="Q8QGX4"/>
<dbReference type="OrthoDB" id="431717at2759"/>
<dbReference type="PhylomeDB" id="Q8QGX4"/>
<dbReference type="Reactome" id="R-GGA-351433">
    <property type="pathway name" value="ATM mediated phosphorylation of repair proteins"/>
</dbReference>
<dbReference type="Reactome" id="R-GGA-353423">
    <property type="pathway name" value="Non-homologous end joining (NHEJ)"/>
</dbReference>
<dbReference type="PRO" id="PR:Q8QGX4"/>
<dbReference type="Proteomes" id="UP000000539">
    <property type="component" value="Unassembled WGS sequence"/>
</dbReference>
<dbReference type="GO" id="GO:0070419">
    <property type="term" value="C:nonhomologous end joining complex"/>
    <property type="evidence" value="ECO:0000250"/>
    <property type="project" value="UniProtKB"/>
</dbReference>
<dbReference type="GO" id="GO:0005730">
    <property type="term" value="C:nucleolus"/>
    <property type="evidence" value="ECO:0007669"/>
    <property type="project" value="UniProtKB-SubCell"/>
</dbReference>
<dbReference type="GO" id="GO:0005654">
    <property type="term" value="C:nucleoplasm"/>
    <property type="evidence" value="ECO:0000304"/>
    <property type="project" value="Reactome"/>
</dbReference>
<dbReference type="GO" id="GO:0005634">
    <property type="term" value="C:nucleus"/>
    <property type="evidence" value="ECO:0000318"/>
    <property type="project" value="GO_Central"/>
</dbReference>
<dbReference type="GO" id="GO:0005524">
    <property type="term" value="F:ATP binding"/>
    <property type="evidence" value="ECO:0007669"/>
    <property type="project" value="UniProtKB-KW"/>
</dbReference>
<dbReference type="GO" id="GO:0004677">
    <property type="term" value="F:DNA-dependent protein kinase activity"/>
    <property type="evidence" value="ECO:0007669"/>
    <property type="project" value="InterPro"/>
</dbReference>
<dbReference type="GO" id="GO:0035979">
    <property type="term" value="F:histone H2AXS139 kinase activity"/>
    <property type="evidence" value="ECO:0000250"/>
    <property type="project" value="UniProtKB"/>
</dbReference>
<dbReference type="GO" id="GO:0106310">
    <property type="term" value="F:protein serine kinase activity"/>
    <property type="evidence" value="ECO:0007669"/>
    <property type="project" value="RHEA"/>
</dbReference>
<dbReference type="GO" id="GO:0004674">
    <property type="term" value="F:protein serine/threonine kinase activity"/>
    <property type="evidence" value="ECO:0000250"/>
    <property type="project" value="UniProtKB"/>
</dbReference>
<dbReference type="GO" id="GO:0006302">
    <property type="term" value="P:double-strand break repair"/>
    <property type="evidence" value="ECO:0000318"/>
    <property type="project" value="GO_Central"/>
</dbReference>
<dbReference type="GO" id="GO:0000724">
    <property type="term" value="P:double-strand break repair via homologous recombination"/>
    <property type="evidence" value="ECO:0000304"/>
    <property type="project" value="Reactome"/>
</dbReference>
<dbReference type="GO" id="GO:0006303">
    <property type="term" value="P:double-strand break repair via nonhomologous end joining"/>
    <property type="evidence" value="ECO:0007669"/>
    <property type="project" value="InterPro"/>
</dbReference>
<dbReference type="GO" id="GO:0033152">
    <property type="term" value="P:immunoglobulin V(D)J recombination"/>
    <property type="evidence" value="ECO:0000318"/>
    <property type="project" value="GO_Central"/>
</dbReference>
<dbReference type="GO" id="GO:0008630">
    <property type="term" value="P:intrinsic apoptotic signaling pathway in response to DNA damage"/>
    <property type="evidence" value="ECO:0000318"/>
    <property type="project" value="GO_Central"/>
</dbReference>
<dbReference type="GO" id="GO:0031571">
    <property type="term" value="P:mitotic G1 DNA damage checkpoint signaling"/>
    <property type="evidence" value="ECO:0000250"/>
    <property type="project" value="UniProtKB"/>
</dbReference>
<dbReference type="GO" id="GO:0042254">
    <property type="term" value="P:ribosome biogenesis"/>
    <property type="evidence" value="ECO:0007669"/>
    <property type="project" value="UniProtKB-KW"/>
</dbReference>
<dbReference type="GO" id="GO:0000723">
    <property type="term" value="P:telomere maintenance"/>
    <property type="evidence" value="ECO:0000318"/>
    <property type="project" value="GO_Central"/>
</dbReference>
<dbReference type="CDD" id="cd05172">
    <property type="entry name" value="PIKKc_DNA-PK"/>
    <property type="match status" value="1"/>
</dbReference>
<dbReference type="FunFam" id="1.10.1070.11:FF:000018">
    <property type="entry name" value="DNA-dependent protein kinase catalytic subunit"/>
    <property type="match status" value="1"/>
</dbReference>
<dbReference type="FunFam" id="3.30.1010.10:FF:000013">
    <property type="entry name" value="Protein kinase, DNA-activated, catalytic subunit"/>
    <property type="match status" value="1"/>
</dbReference>
<dbReference type="Gene3D" id="1.10.1070.11">
    <property type="entry name" value="Phosphatidylinositol 3-/4-kinase, catalytic domain"/>
    <property type="match status" value="1"/>
</dbReference>
<dbReference type="Gene3D" id="3.30.1010.10">
    <property type="entry name" value="Phosphatidylinositol 3-kinase Catalytic Subunit, Chain A, domain 4"/>
    <property type="match status" value="1"/>
</dbReference>
<dbReference type="InterPro" id="IPR016024">
    <property type="entry name" value="ARM-type_fold"/>
</dbReference>
<dbReference type="InterPro" id="IPR050517">
    <property type="entry name" value="DDR_Repair_Kinase"/>
</dbReference>
<dbReference type="InterPro" id="IPR037706">
    <property type="entry name" value="DNA-PK_dom"/>
</dbReference>
<dbReference type="InterPro" id="IPR046804">
    <property type="entry name" value="DNA-PKcs_N"/>
</dbReference>
<dbReference type="InterPro" id="IPR046803">
    <property type="entry name" value="DNAPKcs_CC1-2"/>
</dbReference>
<dbReference type="InterPro" id="IPR012582">
    <property type="entry name" value="DNAPKcs_CC3"/>
</dbReference>
<dbReference type="InterPro" id="IPR045581">
    <property type="entry name" value="DNAPKcs_CC5"/>
</dbReference>
<dbReference type="InterPro" id="IPR003152">
    <property type="entry name" value="FATC_dom"/>
</dbReference>
<dbReference type="InterPro" id="IPR011009">
    <property type="entry name" value="Kinase-like_dom_sf"/>
</dbReference>
<dbReference type="InterPro" id="IPR000403">
    <property type="entry name" value="PI3/4_kinase_cat_dom"/>
</dbReference>
<dbReference type="InterPro" id="IPR036940">
    <property type="entry name" value="PI3/4_kinase_cat_sf"/>
</dbReference>
<dbReference type="InterPro" id="IPR018936">
    <property type="entry name" value="PI3/4_kinase_CS"/>
</dbReference>
<dbReference type="InterPro" id="IPR003151">
    <property type="entry name" value="PIK-rel_kinase_FAT"/>
</dbReference>
<dbReference type="InterPro" id="IPR014009">
    <property type="entry name" value="PIK_FAT"/>
</dbReference>
<dbReference type="PANTHER" id="PTHR11139">
    <property type="entry name" value="ATAXIA TELANGIECTASIA MUTATED ATM -RELATED"/>
    <property type="match status" value="1"/>
</dbReference>
<dbReference type="PANTHER" id="PTHR11139:SF68">
    <property type="entry name" value="DNA-DEPENDENT PROTEIN KINASE CATALYTIC SUBUNIT"/>
    <property type="match status" value="1"/>
</dbReference>
<dbReference type="Pfam" id="PF20500">
    <property type="entry name" value="DNA-PKcs_N"/>
    <property type="match status" value="1"/>
</dbReference>
<dbReference type="Pfam" id="PF20502">
    <property type="entry name" value="DNAPKcs_CC1-2"/>
    <property type="match status" value="1"/>
</dbReference>
<dbReference type="Pfam" id="PF08163">
    <property type="entry name" value="DNAPKcs_CC3"/>
    <property type="match status" value="1"/>
</dbReference>
<dbReference type="Pfam" id="PF19704">
    <property type="entry name" value="DNAPKcs_CC5"/>
    <property type="match status" value="1"/>
</dbReference>
<dbReference type="Pfam" id="PF02259">
    <property type="entry name" value="FAT"/>
    <property type="match status" value="1"/>
</dbReference>
<dbReference type="Pfam" id="PF02260">
    <property type="entry name" value="FATC"/>
    <property type="match status" value="1"/>
</dbReference>
<dbReference type="Pfam" id="PF00454">
    <property type="entry name" value="PI3_PI4_kinase"/>
    <property type="match status" value="1"/>
</dbReference>
<dbReference type="SMART" id="SM01343">
    <property type="entry name" value="FATC"/>
    <property type="match status" value="1"/>
</dbReference>
<dbReference type="SMART" id="SM01344">
    <property type="entry name" value="NUC194"/>
    <property type="match status" value="1"/>
</dbReference>
<dbReference type="SMART" id="SM00146">
    <property type="entry name" value="PI3Kc"/>
    <property type="match status" value="1"/>
</dbReference>
<dbReference type="SUPFAM" id="SSF48371">
    <property type="entry name" value="ARM repeat"/>
    <property type="match status" value="2"/>
</dbReference>
<dbReference type="SUPFAM" id="SSF56112">
    <property type="entry name" value="Protein kinase-like (PK-like)"/>
    <property type="match status" value="1"/>
</dbReference>
<dbReference type="PROSITE" id="PS51189">
    <property type="entry name" value="FAT"/>
    <property type="match status" value="1"/>
</dbReference>
<dbReference type="PROSITE" id="PS51190">
    <property type="entry name" value="FATC"/>
    <property type="match status" value="1"/>
</dbReference>
<dbReference type="PROSITE" id="PS00915">
    <property type="entry name" value="PI3_4_KINASE_1"/>
    <property type="match status" value="1"/>
</dbReference>
<dbReference type="PROSITE" id="PS00916">
    <property type="entry name" value="PI3_4_KINASE_2"/>
    <property type="match status" value="1"/>
</dbReference>
<dbReference type="PROSITE" id="PS50290">
    <property type="entry name" value="PI3_4_KINASE_3"/>
    <property type="match status" value="1"/>
</dbReference>